<proteinExistence type="evidence at protein level"/>
<accession>Q09587</accession>
<accession>Q9GTI4</accession>
<accession>Q9GTI5</accession>
<organism>
    <name type="scientific">Caenorhabditis elegans</name>
    <dbReference type="NCBI Taxonomy" id="6239"/>
    <lineage>
        <taxon>Eukaryota</taxon>
        <taxon>Metazoa</taxon>
        <taxon>Ecdysozoa</taxon>
        <taxon>Nematoda</taxon>
        <taxon>Chromadorea</taxon>
        <taxon>Rhabditida</taxon>
        <taxon>Rhabditina</taxon>
        <taxon>Rhabditomorpha</taxon>
        <taxon>Rhabditoidea</taxon>
        <taxon>Rhabditidae</taxon>
        <taxon>Peloderinae</taxon>
        <taxon>Caenorhabditis</taxon>
    </lineage>
</organism>
<gene>
    <name type="primary">nhr-22</name>
    <name type="ORF">K06A1.4</name>
</gene>
<comment type="function">
    <text>Orphan nuclear receptor.</text>
</comment>
<comment type="interaction">
    <interactant intactId="EBI-323124">
        <id>Q09587</id>
    </interactant>
    <interactant intactId="EBI-6094232">
        <id>Q21917</id>
        <label>gpa-7</label>
    </interactant>
    <organismsDiffer>false</organismsDiffer>
    <experiments>3</experiments>
</comment>
<comment type="subcellular location">
    <subcellularLocation>
        <location evidence="1">Nucleus</location>
    </subcellularLocation>
</comment>
<comment type="similarity">
    <text evidence="4">Belongs to the nuclear hormone receptor family.</text>
</comment>
<feature type="chain" id="PRO_0000053772" description="Nuclear hormone receptor family member nhr-22">
    <location>
        <begin position="1"/>
        <end position="579"/>
    </location>
</feature>
<feature type="domain" description="NR LBD" evidence="2">
    <location>
        <begin position="304"/>
        <end position="577"/>
    </location>
</feature>
<feature type="DNA-binding region" description="Nuclear receptor" evidence="1">
    <location>
        <begin position="93"/>
        <end position="173"/>
    </location>
</feature>
<feature type="zinc finger region" description="NR C4-type" evidence="1">
    <location>
        <begin position="96"/>
        <end position="117"/>
    </location>
</feature>
<feature type="zinc finger region" description="NR C4-type" evidence="1">
    <location>
        <begin position="133"/>
        <end position="161"/>
    </location>
</feature>
<feature type="region of interest" description="Disordered" evidence="3">
    <location>
        <begin position="233"/>
        <end position="256"/>
    </location>
</feature>
<feature type="compositionally biased region" description="Low complexity" evidence="3">
    <location>
        <begin position="233"/>
        <end position="242"/>
    </location>
</feature>
<evidence type="ECO:0000255" key="1">
    <source>
        <dbReference type="PROSITE-ProRule" id="PRU00407"/>
    </source>
</evidence>
<evidence type="ECO:0000255" key="2">
    <source>
        <dbReference type="PROSITE-ProRule" id="PRU01189"/>
    </source>
</evidence>
<evidence type="ECO:0000256" key="3">
    <source>
        <dbReference type="SAM" id="MobiDB-lite"/>
    </source>
</evidence>
<evidence type="ECO:0000305" key="4"/>
<keyword id="KW-0238">DNA-binding</keyword>
<keyword id="KW-0479">Metal-binding</keyword>
<keyword id="KW-0539">Nucleus</keyword>
<keyword id="KW-0675">Receptor</keyword>
<keyword id="KW-1185">Reference proteome</keyword>
<keyword id="KW-0804">Transcription</keyword>
<keyword id="KW-0805">Transcription regulation</keyword>
<keyword id="KW-0862">Zinc</keyword>
<keyword id="KW-0863">Zinc-finger</keyword>
<protein>
    <recommendedName>
        <fullName>Nuclear hormone receptor family member nhr-22</fullName>
    </recommendedName>
</protein>
<reference key="1">
    <citation type="journal article" date="1998" name="Science">
        <title>Genome sequence of the nematode C. elegans: a platform for investigating biology.</title>
        <authorList>
            <consortium name="The C. elegans sequencing consortium"/>
        </authorList>
    </citation>
    <scope>NUCLEOTIDE SEQUENCE [LARGE SCALE GENOMIC DNA]</scope>
    <source>
        <strain>Bristol N2</strain>
    </source>
</reference>
<reference key="2">
    <citation type="journal article" date="2005" name="J. Mol. Evol.">
        <title>Explosive lineage-specific expansion of the orphan nuclear receptor HNF4 in nematodes.</title>
        <authorList>
            <person name="Robinson-Rechavi M."/>
            <person name="Maina C.V."/>
            <person name="Gissendanner C.R."/>
            <person name="Laudet V."/>
            <person name="Sluder A."/>
        </authorList>
    </citation>
    <scope>NUCLEOTIDE SEQUENCE [MRNA] OF 25-579</scope>
</reference>
<name>NHR22_CAEEL</name>
<sequence length="579" mass="66072">MSTDLLYEYFYPPTDLFKNTFEDVPPSPESLDVGDSLGSSPSYDLGFQPSFDIDFCIWKEGSSSPPPESNHLPEIVNKASTSPRGMPSPLTDSRSCHVCSSPTANTLHFGGRSCKACAAFFRRSVSMSMTYECIGTGDDTNPCRTHYELRMICRHCRFIKCLDAGMRRELVQARKEETRVAKRRSKGLVVSKKEDDDVESSYDEYVNTYTNVQDSSPKMESGINEMTIPESYLSPDPSSSQPLDMTVTPPPLHRSTPSILLTPATGDRMHCQRVLSNSPPFDIHQASTSHAGFIQHVQFYPVVEVENKIFELVDHYVRTEASLNDRRKIMYTDTQIRDVFDTTCECPYENHQLKPFNYKSFCGFVKHDFVMILDYVNQFPEFQALHKNDKNVVYRMACAVDSMLASAYYSYKVGIEKERLILFNGDYINMNPIPISGDEPGAGTEFQTPQEHEKYKTLMPLKLKQYFDLAIPFARLEVSFEEYVLLKALIIWQISNYRLLEEGRAICARQRDTIVQALHKVVEERGDEDPAIRVGQLLLSMSYITEQVQAMTNSYLVMTFFDVVSCDSIMYDLLSFRDD</sequence>
<dbReference type="EMBL" id="FO081583">
    <property type="protein sequence ID" value="CCD72612.1"/>
    <property type="molecule type" value="Genomic_DNA"/>
</dbReference>
<dbReference type="EMBL" id="AF273772">
    <property type="protein sequence ID" value="AAG15121.1"/>
    <property type="molecule type" value="mRNA"/>
</dbReference>
<dbReference type="EMBL" id="AF273773">
    <property type="protein sequence ID" value="AAG15122.1"/>
    <property type="molecule type" value="mRNA"/>
</dbReference>
<dbReference type="PIR" id="T34331">
    <property type="entry name" value="T34331"/>
</dbReference>
<dbReference type="RefSeq" id="NP_495298.1">
    <property type="nucleotide sequence ID" value="NM_062897.7"/>
</dbReference>
<dbReference type="BioGRID" id="39405">
    <property type="interactions" value="31"/>
</dbReference>
<dbReference type="DIP" id="DIP-26411N"/>
<dbReference type="FunCoup" id="Q09587">
    <property type="interactions" value="760"/>
</dbReference>
<dbReference type="IntAct" id="Q09587">
    <property type="interactions" value="29"/>
</dbReference>
<dbReference type="MINT" id="Q09587"/>
<dbReference type="STRING" id="6239.K06A1.4.2"/>
<dbReference type="PaxDb" id="6239-K06A1.4.2"/>
<dbReference type="EnsemblMetazoa" id="K06A1.4.1">
    <property type="protein sequence ID" value="K06A1.4.1"/>
    <property type="gene ID" value="WBGene00003621"/>
</dbReference>
<dbReference type="GeneID" id="174066"/>
<dbReference type="KEGG" id="cel:CELE_K06A1.4"/>
<dbReference type="UCSC" id="K06A1.4.1">
    <property type="organism name" value="c. elegans"/>
</dbReference>
<dbReference type="AGR" id="WB:WBGene00003621"/>
<dbReference type="CTD" id="174066"/>
<dbReference type="WormBase" id="K06A1.4">
    <property type="protein sequence ID" value="CE18017"/>
    <property type="gene ID" value="WBGene00003621"/>
    <property type="gene designation" value="nhr-22"/>
</dbReference>
<dbReference type="eggNOG" id="KOG3575">
    <property type="taxonomic scope" value="Eukaryota"/>
</dbReference>
<dbReference type="HOGENOM" id="CLU_007368_17_0_1"/>
<dbReference type="InParanoid" id="Q09587"/>
<dbReference type="OMA" id="FDTTCEC"/>
<dbReference type="OrthoDB" id="5793246at2759"/>
<dbReference type="PhylomeDB" id="Q09587"/>
<dbReference type="SignaLink" id="Q09587"/>
<dbReference type="PRO" id="PR:Q09587"/>
<dbReference type="Proteomes" id="UP000001940">
    <property type="component" value="Chromosome II"/>
</dbReference>
<dbReference type="Bgee" id="WBGene00003621">
    <property type="expression patterns" value="Expressed in larva and 3 other cell types or tissues"/>
</dbReference>
<dbReference type="GO" id="GO:0005829">
    <property type="term" value="C:cytosol"/>
    <property type="evidence" value="ECO:0000314"/>
    <property type="project" value="WormBase"/>
</dbReference>
<dbReference type="GO" id="GO:0005634">
    <property type="term" value="C:nucleus"/>
    <property type="evidence" value="ECO:0000314"/>
    <property type="project" value="WormBase"/>
</dbReference>
<dbReference type="GO" id="GO:0003700">
    <property type="term" value="F:DNA-binding transcription factor activity"/>
    <property type="evidence" value="ECO:0007669"/>
    <property type="project" value="InterPro"/>
</dbReference>
<dbReference type="GO" id="GO:0000978">
    <property type="term" value="F:RNA polymerase II cis-regulatory region sequence-specific DNA binding"/>
    <property type="evidence" value="ECO:0007669"/>
    <property type="project" value="InterPro"/>
</dbReference>
<dbReference type="GO" id="GO:0008270">
    <property type="term" value="F:zinc ion binding"/>
    <property type="evidence" value="ECO:0007669"/>
    <property type="project" value="UniProtKB-KW"/>
</dbReference>
<dbReference type="CDD" id="cd06960">
    <property type="entry name" value="NR_DBD_HNF4A"/>
    <property type="match status" value="1"/>
</dbReference>
<dbReference type="CDD" id="cd06157">
    <property type="entry name" value="NR_LBD"/>
    <property type="match status" value="1"/>
</dbReference>
<dbReference type="FunFam" id="3.30.50.10:FF:000073">
    <property type="entry name" value="Nuclear hormone receptor family member nhr-121"/>
    <property type="match status" value="1"/>
</dbReference>
<dbReference type="FunFam" id="1.10.565.10:FF:000068">
    <property type="entry name" value="Nuclear hormone receptor family member nhr-86"/>
    <property type="match status" value="1"/>
</dbReference>
<dbReference type="Gene3D" id="3.30.50.10">
    <property type="entry name" value="Erythroid Transcription Factor GATA-1, subunit A"/>
    <property type="match status" value="1"/>
</dbReference>
<dbReference type="Gene3D" id="1.10.565.10">
    <property type="entry name" value="Retinoid X Receptor"/>
    <property type="match status" value="1"/>
</dbReference>
<dbReference type="InterPro" id="IPR049636">
    <property type="entry name" value="HNF4-like_DBD"/>
</dbReference>
<dbReference type="InterPro" id="IPR035500">
    <property type="entry name" value="NHR-like_dom_sf"/>
</dbReference>
<dbReference type="InterPro" id="IPR000536">
    <property type="entry name" value="Nucl_hrmn_rcpt_lig-bd"/>
</dbReference>
<dbReference type="InterPro" id="IPR001723">
    <property type="entry name" value="Nuclear_hrmn_rcpt"/>
</dbReference>
<dbReference type="InterPro" id="IPR001628">
    <property type="entry name" value="Znf_hrmn_rcpt"/>
</dbReference>
<dbReference type="InterPro" id="IPR013088">
    <property type="entry name" value="Znf_NHR/GATA"/>
</dbReference>
<dbReference type="PANTHER" id="PTHR46397:SF3">
    <property type="entry name" value="NR LBD DOMAIN-CONTAINING PROTEIN-RELATED"/>
    <property type="match status" value="1"/>
</dbReference>
<dbReference type="PANTHER" id="PTHR46397">
    <property type="entry name" value="NUCLEAR HORMONE RECEPTOR FAMILY-RELATED"/>
    <property type="match status" value="1"/>
</dbReference>
<dbReference type="Pfam" id="PF00104">
    <property type="entry name" value="Hormone_recep"/>
    <property type="match status" value="1"/>
</dbReference>
<dbReference type="Pfam" id="PF00105">
    <property type="entry name" value="zf-C4"/>
    <property type="match status" value="1"/>
</dbReference>
<dbReference type="PRINTS" id="PR00398">
    <property type="entry name" value="STRDHORMONER"/>
</dbReference>
<dbReference type="PRINTS" id="PR00047">
    <property type="entry name" value="STROIDFINGER"/>
</dbReference>
<dbReference type="SMART" id="SM00430">
    <property type="entry name" value="HOLI"/>
    <property type="match status" value="1"/>
</dbReference>
<dbReference type="SMART" id="SM00399">
    <property type="entry name" value="ZnF_C4"/>
    <property type="match status" value="1"/>
</dbReference>
<dbReference type="SUPFAM" id="SSF57716">
    <property type="entry name" value="Glucocorticoid receptor-like (DNA-binding domain)"/>
    <property type="match status" value="1"/>
</dbReference>
<dbReference type="SUPFAM" id="SSF48508">
    <property type="entry name" value="Nuclear receptor ligand-binding domain"/>
    <property type="match status" value="1"/>
</dbReference>
<dbReference type="PROSITE" id="PS51843">
    <property type="entry name" value="NR_LBD"/>
    <property type="match status" value="1"/>
</dbReference>
<dbReference type="PROSITE" id="PS00031">
    <property type="entry name" value="NUCLEAR_REC_DBD_1"/>
    <property type="match status" value="1"/>
</dbReference>
<dbReference type="PROSITE" id="PS51030">
    <property type="entry name" value="NUCLEAR_REC_DBD_2"/>
    <property type="match status" value="1"/>
</dbReference>